<reference key="1">
    <citation type="submission" date="2007-03" db="EMBL/GenBank/DDBJ databases">
        <title>Genome sequence of Rhodospirillum centenum.</title>
        <authorList>
            <person name="Touchman J.W."/>
            <person name="Bauer C."/>
            <person name="Blankenship R.E."/>
        </authorList>
    </citation>
    <scope>NUCLEOTIDE SEQUENCE [LARGE SCALE GENOMIC DNA]</scope>
    <source>
        <strain>ATCC 51521 / SW</strain>
    </source>
</reference>
<accession>B6IUW3</accession>
<keyword id="KW-0067">ATP-binding</keyword>
<keyword id="KW-0963">Cytoplasm</keyword>
<keyword id="KW-0275">Fatty acid biosynthesis</keyword>
<keyword id="KW-0276">Fatty acid metabolism</keyword>
<keyword id="KW-0444">Lipid biosynthesis</keyword>
<keyword id="KW-0443">Lipid metabolism</keyword>
<keyword id="KW-0547">Nucleotide-binding</keyword>
<keyword id="KW-1185">Reference proteome</keyword>
<keyword id="KW-0808">Transferase</keyword>
<protein>
    <recommendedName>
        <fullName evidence="1">Acetyl-coenzyme A carboxylase carboxyl transferase subunit alpha</fullName>
        <shortName evidence="1">ACCase subunit alpha</shortName>
        <shortName evidence="1">Acetyl-CoA carboxylase carboxyltransferase subunit alpha</shortName>
        <ecNumber evidence="1">2.1.3.15</ecNumber>
    </recommendedName>
</protein>
<sequence>MHFLEFEKPIADLEGKIEELRTLTDGGDINIADEVKKLQEKVDKLLRSTYAKLTPAQKVQVARHPERPHCLDYIQRLITDFTPLAGDRLFAEDRAIVGGLGRFRGRSVVVIGQERGHDTESRVRHNFGMAKPEGYRKAQRLLQLADRFRLPVVTLVDTAGAFPGVSAEERGQAEAIARSIETCLRLKVPLVSAVIGEGGSGGAIAIATADRVLMLEHAIYSVISPEGCASILWRSAANASDAAQALRLTAQDLKELGVIDRVVMEPVGGAHRRREEMIATLGNAIEDALDDLREQDGATLRLNRRQKFLDIGQKGLG</sequence>
<evidence type="ECO:0000255" key="1">
    <source>
        <dbReference type="HAMAP-Rule" id="MF_00823"/>
    </source>
</evidence>
<evidence type="ECO:0000255" key="2">
    <source>
        <dbReference type="PROSITE-ProRule" id="PRU01137"/>
    </source>
</evidence>
<feature type="chain" id="PRO_1000134512" description="Acetyl-coenzyme A carboxylase carboxyl transferase subunit alpha">
    <location>
        <begin position="1"/>
        <end position="317"/>
    </location>
</feature>
<feature type="domain" description="CoA carboxyltransferase C-terminal" evidence="2">
    <location>
        <begin position="37"/>
        <end position="291"/>
    </location>
</feature>
<name>ACCA_RHOCS</name>
<gene>
    <name evidence="1" type="primary">accA</name>
    <name type="ordered locus">RC1_2670</name>
</gene>
<organism>
    <name type="scientific">Rhodospirillum centenum (strain ATCC 51521 / SW)</name>
    <dbReference type="NCBI Taxonomy" id="414684"/>
    <lineage>
        <taxon>Bacteria</taxon>
        <taxon>Pseudomonadati</taxon>
        <taxon>Pseudomonadota</taxon>
        <taxon>Alphaproteobacteria</taxon>
        <taxon>Rhodospirillales</taxon>
        <taxon>Rhodospirillaceae</taxon>
        <taxon>Rhodospirillum</taxon>
    </lineage>
</organism>
<comment type="function">
    <text evidence="1">Component of the acetyl coenzyme A carboxylase (ACC) complex. First, biotin carboxylase catalyzes the carboxylation of biotin on its carrier protein (BCCP) and then the CO(2) group is transferred by the carboxyltransferase to acetyl-CoA to form malonyl-CoA.</text>
</comment>
<comment type="catalytic activity">
    <reaction evidence="1">
        <text>N(6)-carboxybiotinyl-L-lysyl-[protein] + acetyl-CoA = N(6)-biotinyl-L-lysyl-[protein] + malonyl-CoA</text>
        <dbReference type="Rhea" id="RHEA:54728"/>
        <dbReference type="Rhea" id="RHEA-COMP:10505"/>
        <dbReference type="Rhea" id="RHEA-COMP:10506"/>
        <dbReference type="ChEBI" id="CHEBI:57288"/>
        <dbReference type="ChEBI" id="CHEBI:57384"/>
        <dbReference type="ChEBI" id="CHEBI:83144"/>
        <dbReference type="ChEBI" id="CHEBI:83145"/>
        <dbReference type="EC" id="2.1.3.15"/>
    </reaction>
</comment>
<comment type="pathway">
    <text evidence="1">Lipid metabolism; malonyl-CoA biosynthesis; malonyl-CoA from acetyl-CoA: step 1/1.</text>
</comment>
<comment type="subunit">
    <text evidence="1">Acetyl-CoA carboxylase is a heterohexamer composed of biotin carboxyl carrier protein (AccB), biotin carboxylase (AccC) and two subunits each of ACCase subunit alpha (AccA) and ACCase subunit beta (AccD).</text>
</comment>
<comment type="subcellular location">
    <subcellularLocation>
        <location evidence="1">Cytoplasm</location>
    </subcellularLocation>
</comment>
<comment type="similarity">
    <text evidence="1">Belongs to the AccA family.</text>
</comment>
<dbReference type="EC" id="2.1.3.15" evidence="1"/>
<dbReference type="EMBL" id="CP000613">
    <property type="protein sequence ID" value="ACJ00045.1"/>
    <property type="molecule type" value="Genomic_DNA"/>
</dbReference>
<dbReference type="RefSeq" id="WP_012567826.1">
    <property type="nucleotide sequence ID" value="NC_011420.2"/>
</dbReference>
<dbReference type="SMR" id="B6IUW3"/>
<dbReference type="STRING" id="414684.RC1_2670"/>
<dbReference type="KEGG" id="rce:RC1_2670"/>
<dbReference type="eggNOG" id="COG0825">
    <property type="taxonomic scope" value="Bacteria"/>
</dbReference>
<dbReference type="HOGENOM" id="CLU_015486_0_2_5"/>
<dbReference type="OrthoDB" id="9808023at2"/>
<dbReference type="UniPathway" id="UPA00655">
    <property type="reaction ID" value="UER00711"/>
</dbReference>
<dbReference type="Proteomes" id="UP000001591">
    <property type="component" value="Chromosome"/>
</dbReference>
<dbReference type="GO" id="GO:0009317">
    <property type="term" value="C:acetyl-CoA carboxylase complex"/>
    <property type="evidence" value="ECO:0007669"/>
    <property type="project" value="InterPro"/>
</dbReference>
<dbReference type="GO" id="GO:0003989">
    <property type="term" value="F:acetyl-CoA carboxylase activity"/>
    <property type="evidence" value="ECO:0007669"/>
    <property type="project" value="InterPro"/>
</dbReference>
<dbReference type="GO" id="GO:0005524">
    <property type="term" value="F:ATP binding"/>
    <property type="evidence" value="ECO:0007669"/>
    <property type="project" value="UniProtKB-KW"/>
</dbReference>
<dbReference type="GO" id="GO:0016743">
    <property type="term" value="F:carboxyl- or carbamoyltransferase activity"/>
    <property type="evidence" value="ECO:0007669"/>
    <property type="project" value="UniProtKB-UniRule"/>
</dbReference>
<dbReference type="GO" id="GO:0006633">
    <property type="term" value="P:fatty acid biosynthetic process"/>
    <property type="evidence" value="ECO:0007669"/>
    <property type="project" value="UniProtKB-KW"/>
</dbReference>
<dbReference type="GO" id="GO:2001295">
    <property type="term" value="P:malonyl-CoA biosynthetic process"/>
    <property type="evidence" value="ECO:0007669"/>
    <property type="project" value="UniProtKB-UniRule"/>
</dbReference>
<dbReference type="Gene3D" id="3.90.226.10">
    <property type="entry name" value="2-enoyl-CoA Hydratase, Chain A, domain 1"/>
    <property type="match status" value="1"/>
</dbReference>
<dbReference type="HAMAP" id="MF_00823">
    <property type="entry name" value="AcetylCoA_CT_alpha"/>
    <property type="match status" value="1"/>
</dbReference>
<dbReference type="InterPro" id="IPR001095">
    <property type="entry name" value="Acetyl_CoA_COase_a_su"/>
</dbReference>
<dbReference type="InterPro" id="IPR029045">
    <property type="entry name" value="ClpP/crotonase-like_dom_sf"/>
</dbReference>
<dbReference type="InterPro" id="IPR011763">
    <property type="entry name" value="COA_CT_C"/>
</dbReference>
<dbReference type="NCBIfam" id="TIGR00513">
    <property type="entry name" value="accA"/>
    <property type="match status" value="1"/>
</dbReference>
<dbReference type="NCBIfam" id="NF041504">
    <property type="entry name" value="AccA_sub"/>
    <property type="match status" value="1"/>
</dbReference>
<dbReference type="NCBIfam" id="NF004344">
    <property type="entry name" value="PRK05724.1"/>
    <property type="match status" value="1"/>
</dbReference>
<dbReference type="PANTHER" id="PTHR42853">
    <property type="entry name" value="ACETYL-COENZYME A CARBOXYLASE CARBOXYL TRANSFERASE SUBUNIT ALPHA"/>
    <property type="match status" value="1"/>
</dbReference>
<dbReference type="PANTHER" id="PTHR42853:SF3">
    <property type="entry name" value="ACETYL-COENZYME A CARBOXYLASE CARBOXYL TRANSFERASE SUBUNIT ALPHA, CHLOROPLASTIC"/>
    <property type="match status" value="1"/>
</dbReference>
<dbReference type="Pfam" id="PF03255">
    <property type="entry name" value="ACCA"/>
    <property type="match status" value="1"/>
</dbReference>
<dbReference type="PRINTS" id="PR01069">
    <property type="entry name" value="ACCCTRFRASEA"/>
</dbReference>
<dbReference type="SUPFAM" id="SSF52096">
    <property type="entry name" value="ClpP/crotonase"/>
    <property type="match status" value="1"/>
</dbReference>
<dbReference type="PROSITE" id="PS50989">
    <property type="entry name" value="COA_CT_CTER"/>
    <property type="match status" value="1"/>
</dbReference>
<proteinExistence type="inferred from homology"/>